<keyword id="KW-0028">Amino-acid biosynthesis</keyword>
<keyword id="KW-0055">Arginine biosynthesis</keyword>
<keyword id="KW-0963">Cytoplasm</keyword>
<keyword id="KW-0456">Lyase</keyword>
<keyword id="KW-1185">Reference proteome</keyword>
<comment type="catalytic activity">
    <reaction evidence="1">
        <text>2-(N(omega)-L-arginino)succinate = fumarate + L-arginine</text>
        <dbReference type="Rhea" id="RHEA:24020"/>
        <dbReference type="ChEBI" id="CHEBI:29806"/>
        <dbReference type="ChEBI" id="CHEBI:32682"/>
        <dbReference type="ChEBI" id="CHEBI:57472"/>
        <dbReference type="EC" id="4.3.2.1"/>
    </reaction>
</comment>
<comment type="pathway">
    <text evidence="1">Amino-acid biosynthesis; L-arginine biosynthesis; L-arginine from L-ornithine and carbamoyl phosphate: step 3/3.</text>
</comment>
<comment type="subcellular location">
    <subcellularLocation>
        <location evidence="1">Cytoplasm</location>
    </subcellularLocation>
</comment>
<comment type="similarity">
    <text evidence="1">Belongs to the lyase 1 family. Argininosuccinate lyase subfamily.</text>
</comment>
<organism>
    <name type="scientific">Lacticaseibacillus paracasei (strain ATCC 334 / BCRC 17002 / CCUG 31169 / CIP 107868 / KCTC 3260 / NRRL B-441)</name>
    <name type="common">Lactobacillus paracasei</name>
    <dbReference type="NCBI Taxonomy" id="321967"/>
    <lineage>
        <taxon>Bacteria</taxon>
        <taxon>Bacillati</taxon>
        <taxon>Bacillota</taxon>
        <taxon>Bacilli</taxon>
        <taxon>Lactobacillales</taxon>
        <taxon>Lactobacillaceae</taxon>
        <taxon>Lacticaseibacillus</taxon>
    </lineage>
</organism>
<dbReference type="EC" id="4.3.2.1" evidence="1"/>
<dbReference type="EMBL" id="CP000423">
    <property type="protein sequence ID" value="ABJ71526.1"/>
    <property type="molecule type" value="Genomic_DNA"/>
</dbReference>
<dbReference type="RefSeq" id="WP_003568204.1">
    <property type="nucleotide sequence ID" value="NC_008526.1"/>
</dbReference>
<dbReference type="RefSeq" id="YP_807968.1">
    <property type="nucleotide sequence ID" value="NC_008526.1"/>
</dbReference>
<dbReference type="SMR" id="Q033U6"/>
<dbReference type="STRING" id="321967.LSEI_2812"/>
<dbReference type="PaxDb" id="321967-LSEI_2812"/>
<dbReference type="GeneID" id="57091407"/>
<dbReference type="KEGG" id="lca:LSEI_2812"/>
<dbReference type="PATRIC" id="fig|321967.11.peg.2756"/>
<dbReference type="HOGENOM" id="CLU_027272_2_3_9"/>
<dbReference type="UniPathway" id="UPA00068">
    <property type="reaction ID" value="UER00114"/>
</dbReference>
<dbReference type="Proteomes" id="UP000001651">
    <property type="component" value="Chromosome"/>
</dbReference>
<dbReference type="GO" id="GO:0005829">
    <property type="term" value="C:cytosol"/>
    <property type="evidence" value="ECO:0007669"/>
    <property type="project" value="TreeGrafter"/>
</dbReference>
<dbReference type="GO" id="GO:0004056">
    <property type="term" value="F:argininosuccinate lyase activity"/>
    <property type="evidence" value="ECO:0007669"/>
    <property type="project" value="UniProtKB-UniRule"/>
</dbReference>
<dbReference type="GO" id="GO:0042450">
    <property type="term" value="P:arginine biosynthetic process via ornithine"/>
    <property type="evidence" value="ECO:0007669"/>
    <property type="project" value="InterPro"/>
</dbReference>
<dbReference type="GO" id="GO:0006526">
    <property type="term" value="P:L-arginine biosynthetic process"/>
    <property type="evidence" value="ECO:0007669"/>
    <property type="project" value="UniProtKB-UniRule"/>
</dbReference>
<dbReference type="CDD" id="cd01359">
    <property type="entry name" value="Argininosuccinate_lyase"/>
    <property type="match status" value="1"/>
</dbReference>
<dbReference type="FunFam" id="1.10.275.10:FF:000002">
    <property type="entry name" value="Argininosuccinate lyase"/>
    <property type="match status" value="1"/>
</dbReference>
<dbReference type="FunFam" id="1.10.40.30:FF:000001">
    <property type="entry name" value="Argininosuccinate lyase"/>
    <property type="match status" value="1"/>
</dbReference>
<dbReference type="FunFam" id="1.20.200.10:FF:000002">
    <property type="entry name" value="Argininosuccinate lyase"/>
    <property type="match status" value="1"/>
</dbReference>
<dbReference type="Gene3D" id="1.10.40.30">
    <property type="entry name" value="Fumarase/aspartase (C-terminal domain)"/>
    <property type="match status" value="1"/>
</dbReference>
<dbReference type="Gene3D" id="1.20.200.10">
    <property type="entry name" value="Fumarase/aspartase (Central domain)"/>
    <property type="match status" value="1"/>
</dbReference>
<dbReference type="Gene3D" id="1.10.275.10">
    <property type="entry name" value="Fumarase/aspartase (N-terminal domain)"/>
    <property type="match status" value="1"/>
</dbReference>
<dbReference type="HAMAP" id="MF_00006">
    <property type="entry name" value="Arg_succ_lyase"/>
    <property type="match status" value="1"/>
</dbReference>
<dbReference type="InterPro" id="IPR029419">
    <property type="entry name" value="Arg_succ_lyase_C"/>
</dbReference>
<dbReference type="InterPro" id="IPR009049">
    <property type="entry name" value="Argininosuccinate_lyase"/>
</dbReference>
<dbReference type="InterPro" id="IPR024083">
    <property type="entry name" value="Fumarase/histidase_N"/>
</dbReference>
<dbReference type="InterPro" id="IPR020557">
    <property type="entry name" value="Fumarate_lyase_CS"/>
</dbReference>
<dbReference type="InterPro" id="IPR000362">
    <property type="entry name" value="Fumarate_lyase_fam"/>
</dbReference>
<dbReference type="InterPro" id="IPR022761">
    <property type="entry name" value="Fumarate_lyase_N"/>
</dbReference>
<dbReference type="InterPro" id="IPR008948">
    <property type="entry name" value="L-Aspartase-like"/>
</dbReference>
<dbReference type="NCBIfam" id="TIGR00838">
    <property type="entry name" value="argH"/>
    <property type="match status" value="1"/>
</dbReference>
<dbReference type="PANTHER" id="PTHR43814">
    <property type="entry name" value="ARGININOSUCCINATE LYASE"/>
    <property type="match status" value="1"/>
</dbReference>
<dbReference type="PANTHER" id="PTHR43814:SF1">
    <property type="entry name" value="ARGININOSUCCINATE LYASE"/>
    <property type="match status" value="1"/>
</dbReference>
<dbReference type="Pfam" id="PF14698">
    <property type="entry name" value="ASL_C2"/>
    <property type="match status" value="1"/>
</dbReference>
<dbReference type="Pfam" id="PF00206">
    <property type="entry name" value="Lyase_1"/>
    <property type="match status" value="1"/>
</dbReference>
<dbReference type="PRINTS" id="PR00145">
    <property type="entry name" value="ARGSUCLYASE"/>
</dbReference>
<dbReference type="PRINTS" id="PR00149">
    <property type="entry name" value="FUMRATELYASE"/>
</dbReference>
<dbReference type="SUPFAM" id="SSF48557">
    <property type="entry name" value="L-aspartase-like"/>
    <property type="match status" value="1"/>
</dbReference>
<dbReference type="PROSITE" id="PS00163">
    <property type="entry name" value="FUMARATE_LYASES"/>
    <property type="match status" value="1"/>
</dbReference>
<name>ARLY_LACP3</name>
<accession>Q033U6</accession>
<protein>
    <recommendedName>
        <fullName evidence="1">Argininosuccinate lyase</fullName>
        <shortName evidence="1">ASAL</shortName>
        <ecNumber evidence="1">4.3.2.1</ecNumber>
    </recommendedName>
    <alternativeName>
        <fullName evidence="1">Arginosuccinase</fullName>
    </alternativeName>
</protein>
<evidence type="ECO:0000255" key="1">
    <source>
        <dbReference type="HAMAP-Rule" id="MF_00006"/>
    </source>
</evidence>
<feature type="chain" id="PRO_1000057051" description="Argininosuccinate lyase">
    <location>
        <begin position="1"/>
        <end position="460"/>
    </location>
</feature>
<proteinExistence type="inferred from homology"/>
<reference key="1">
    <citation type="journal article" date="2006" name="Proc. Natl. Acad. Sci. U.S.A.">
        <title>Comparative genomics of the lactic acid bacteria.</title>
        <authorList>
            <person name="Makarova K.S."/>
            <person name="Slesarev A."/>
            <person name="Wolf Y.I."/>
            <person name="Sorokin A."/>
            <person name="Mirkin B."/>
            <person name="Koonin E.V."/>
            <person name="Pavlov A."/>
            <person name="Pavlova N."/>
            <person name="Karamychev V."/>
            <person name="Polouchine N."/>
            <person name="Shakhova V."/>
            <person name="Grigoriev I."/>
            <person name="Lou Y."/>
            <person name="Rohksar D."/>
            <person name="Lucas S."/>
            <person name="Huang K."/>
            <person name="Goodstein D.M."/>
            <person name="Hawkins T."/>
            <person name="Plengvidhya V."/>
            <person name="Welker D."/>
            <person name="Hughes J."/>
            <person name="Goh Y."/>
            <person name="Benson A."/>
            <person name="Baldwin K."/>
            <person name="Lee J.-H."/>
            <person name="Diaz-Muniz I."/>
            <person name="Dosti B."/>
            <person name="Smeianov V."/>
            <person name="Wechter W."/>
            <person name="Barabote R."/>
            <person name="Lorca G."/>
            <person name="Altermann E."/>
            <person name="Barrangou R."/>
            <person name="Ganesan B."/>
            <person name="Xie Y."/>
            <person name="Rawsthorne H."/>
            <person name="Tamir D."/>
            <person name="Parker C."/>
            <person name="Breidt F."/>
            <person name="Broadbent J.R."/>
            <person name="Hutkins R."/>
            <person name="O'Sullivan D."/>
            <person name="Steele J."/>
            <person name="Unlu G."/>
            <person name="Saier M.H. Jr."/>
            <person name="Klaenhammer T."/>
            <person name="Richardson P."/>
            <person name="Kozyavkin S."/>
            <person name="Weimer B.C."/>
            <person name="Mills D.A."/>
        </authorList>
    </citation>
    <scope>NUCLEOTIDE SEQUENCE [LARGE SCALE GENOMIC DNA]</scope>
    <source>
        <strain>ATCC 334 / BCRC 17002 / CCUG 31169 / CIP 107868 / KCTC 3260 / NRRL B-441</strain>
    </source>
</reference>
<sequence length="460" mass="51023">MTDKLWGGRFTEKAAHWVDAFGASIGFDQQMAQEDLEGSLAHVKMLGKTGIIPQADADTITAGLQHLQKELAAGKLHFTVENEDIHLNMEALLTAEIGPVAGKLHTARSRNDQVATDLHLWLKHRLPTIKEALTNLQTVLVGQAKVHAATIMPGYTHMQHAQPITYGHYLLAYFEMFQRDWERFDFTQKHTDILPLGAAALAGTTFPIDRTLVAQELGFDQIYHNSLDAVSDRDFALEFLSNSAILMQHLSRMAEELILWSTYEFNYIELGDDFSTGSSIMPQKKNPDFAELIRGKTGRVYGALMGLLTTMKAIPLAYNKDMQEDKEPIFDAYNTILGSLHIFTGMLSDLTVHEKRMAEATTHDFSNATELADYLATKGVPFRQAHAIVGELVLKGIKTNTALQEMPLSELQAAAPQIQQDVYAELTSKAAVDRRTSLGGTAVSNVLKEVARDEEMIASH</sequence>
<gene>
    <name evidence="1" type="primary">argH</name>
    <name type="ordered locus">LSEI_2812</name>
</gene>